<gene>
    <name type="primary">mnhF1</name>
    <name type="ordered locus">SAS0817</name>
</gene>
<name>MNHF1_STAAS</name>
<dbReference type="EMBL" id="BX571857">
    <property type="protein sequence ID" value="CAG42592.1"/>
    <property type="molecule type" value="Genomic_DNA"/>
</dbReference>
<dbReference type="RefSeq" id="WP_001016306.1">
    <property type="nucleotide sequence ID" value="NC_002953.3"/>
</dbReference>
<dbReference type="SMR" id="Q6GAX9"/>
<dbReference type="KEGG" id="sas:SAS0817"/>
<dbReference type="HOGENOM" id="CLU_125825_1_3_9"/>
<dbReference type="GO" id="GO:0005886">
    <property type="term" value="C:plasma membrane"/>
    <property type="evidence" value="ECO:0007669"/>
    <property type="project" value="UniProtKB-SubCell"/>
</dbReference>
<dbReference type="GO" id="GO:0015385">
    <property type="term" value="F:sodium:proton antiporter activity"/>
    <property type="evidence" value="ECO:0007669"/>
    <property type="project" value="TreeGrafter"/>
</dbReference>
<dbReference type="InterPro" id="IPR007208">
    <property type="entry name" value="MrpF/PhaF-like"/>
</dbReference>
<dbReference type="NCBIfam" id="NF009248">
    <property type="entry name" value="PRK12600.1"/>
    <property type="match status" value="1"/>
</dbReference>
<dbReference type="PANTHER" id="PTHR34702">
    <property type="entry name" value="NA(+)/H(+) ANTIPORTER SUBUNIT F1"/>
    <property type="match status" value="1"/>
</dbReference>
<dbReference type="PANTHER" id="PTHR34702:SF1">
    <property type="entry name" value="NA(+)_H(+) ANTIPORTER SUBUNIT F"/>
    <property type="match status" value="1"/>
</dbReference>
<dbReference type="Pfam" id="PF04066">
    <property type="entry name" value="MrpF_PhaF"/>
    <property type="match status" value="1"/>
</dbReference>
<dbReference type="PIRSF" id="PIRSF028784">
    <property type="entry name" value="MrpF"/>
    <property type="match status" value="1"/>
</dbReference>
<protein>
    <recommendedName>
        <fullName>Na(+)/H(+) antiporter subunit F1</fullName>
    </recommendedName>
    <alternativeName>
        <fullName>Mnh complex subunit F1</fullName>
    </alternativeName>
</protein>
<sequence length="97" mass="10616">MNHNVIIVIALIIVVISMLAMLIRVVLGPSLADRVVALDAIGLQLMAVIALFSILLNIKYMIVVIMMIGILAFLGTAVFSKFMDKGKVIEHDQNHTD</sequence>
<organism>
    <name type="scientific">Staphylococcus aureus (strain MSSA476)</name>
    <dbReference type="NCBI Taxonomy" id="282459"/>
    <lineage>
        <taxon>Bacteria</taxon>
        <taxon>Bacillati</taxon>
        <taxon>Bacillota</taxon>
        <taxon>Bacilli</taxon>
        <taxon>Bacillales</taxon>
        <taxon>Staphylococcaceae</taxon>
        <taxon>Staphylococcus</taxon>
    </lineage>
</organism>
<reference key="1">
    <citation type="journal article" date="2004" name="Proc. Natl. Acad. Sci. U.S.A.">
        <title>Complete genomes of two clinical Staphylococcus aureus strains: evidence for the rapid evolution of virulence and drug resistance.</title>
        <authorList>
            <person name="Holden M.T.G."/>
            <person name="Feil E.J."/>
            <person name="Lindsay J.A."/>
            <person name="Peacock S.J."/>
            <person name="Day N.P.J."/>
            <person name="Enright M.C."/>
            <person name="Foster T.J."/>
            <person name="Moore C.E."/>
            <person name="Hurst L."/>
            <person name="Atkin R."/>
            <person name="Barron A."/>
            <person name="Bason N."/>
            <person name="Bentley S.D."/>
            <person name="Chillingworth C."/>
            <person name="Chillingworth T."/>
            <person name="Churcher C."/>
            <person name="Clark L."/>
            <person name="Corton C."/>
            <person name="Cronin A."/>
            <person name="Doggett J."/>
            <person name="Dowd L."/>
            <person name="Feltwell T."/>
            <person name="Hance Z."/>
            <person name="Harris B."/>
            <person name="Hauser H."/>
            <person name="Holroyd S."/>
            <person name="Jagels K."/>
            <person name="James K.D."/>
            <person name="Lennard N."/>
            <person name="Line A."/>
            <person name="Mayes R."/>
            <person name="Moule S."/>
            <person name="Mungall K."/>
            <person name="Ormond D."/>
            <person name="Quail M.A."/>
            <person name="Rabbinowitsch E."/>
            <person name="Rutherford K.M."/>
            <person name="Sanders M."/>
            <person name="Sharp S."/>
            <person name="Simmonds M."/>
            <person name="Stevens K."/>
            <person name="Whitehead S."/>
            <person name="Barrell B.G."/>
            <person name="Spratt B.G."/>
            <person name="Parkhill J."/>
        </authorList>
    </citation>
    <scope>NUCLEOTIDE SEQUENCE [LARGE SCALE GENOMIC DNA]</scope>
    <source>
        <strain>MSSA476</strain>
    </source>
</reference>
<accession>Q6GAX9</accession>
<keyword id="KW-0050">Antiport</keyword>
<keyword id="KW-1003">Cell membrane</keyword>
<keyword id="KW-0375">Hydrogen ion transport</keyword>
<keyword id="KW-0406">Ion transport</keyword>
<keyword id="KW-0472">Membrane</keyword>
<keyword id="KW-0915">Sodium</keyword>
<keyword id="KW-0739">Sodium transport</keyword>
<keyword id="KW-0812">Transmembrane</keyword>
<keyword id="KW-1133">Transmembrane helix</keyword>
<keyword id="KW-0813">Transport</keyword>
<evidence type="ECO:0000250" key="1"/>
<evidence type="ECO:0000255" key="2"/>
<evidence type="ECO:0000305" key="3"/>
<feature type="chain" id="PRO_0000087739" description="Na(+)/H(+) antiporter subunit F1">
    <location>
        <begin position="1"/>
        <end position="97"/>
    </location>
</feature>
<feature type="transmembrane region" description="Helical" evidence="2">
    <location>
        <begin position="5"/>
        <end position="27"/>
    </location>
</feature>
<feature type="transmembrane region" description="Helical" evidence="2">
    <location>
        <begin position="34"/>
        <end position="56"/>
    </location>
</feature>
<feature type="transmembrane region" description="Helical" evidence="2">
    <location>
        <begin position="60"/>
        <end position="82"/>
    </location>
</feature>
<proteinExistence type="inferred from homology"/>
<comment type="function">
    <text evidence="1">Mnh complex is a Na(+)/H(+) antiporter involved in Na(+) excretion.</text>
</comment>
<comment type="subunit">
    <text evidence="1">May form a heterooligomeric complex that consists of seven subunits: mnhA1, mnhB1, mnhC1, mnhD1, mnhE1, mnhF1 and mnhG1.</text>
</comment>
<comment type="subcellular location">
    <subcellularLocation>
        <location evidence="3">Cell membrane</location>
        <topology evidence="3">Multi-pass membrane protein</topology>
    </subcellularLocation>
</comment>
<comment type="similarity">
    <text evidence="3">Belongs to the CPA3 antiporters (TC 2.A.63) subunit F family.</text>
</comment>